<evidence type="ECO:0000255" key="1">
    <source>
        <dbReference type="HAMAP-Rule" id="MF_01810"/>
    </source>
</evidence>
<evidence type="ECO:0000256" key="2">
    <source>
        <dbReference type="SAM" id="MobiDB-lite"/>
    </source>
</evidence>
<keyword id="KW-0997">Cell inner membrane</keyword>
<keyword id="KW-1003">Cell membrane</keyword>
<keyword id="KW-0143">Chaperone</keyword>
<keyword id="KW-0472">Membrane</keyword>
<keyword id="KW-0653">Protein transport</keyword>
<keyword id="KW-0812">Transmembrane</keyword>
<keyword id="KW-1133">Transmembrane helix</keyword>
<keyword id="KW-0813">Transport</keyword>
<comment type="function">
    <text evidence="1">Required for the insertion and/or proper folding and/or complex formation of integral membrane proteins into the membrane. Involved in integration of membrane proteins that insert both dependently and independently of the Sec translocase complex, as well as at least some lipoproteins. Aids folding of multispanning membrane proteins.</text>
</comment>
<comment type="subunit">
    <text evidence="1">Interacts with the Sec translocase complex via SecD. Specifically interacts with transmembrane segments of nascent integral membrane proteins during membrane integration.</text>
</comment>
<comment type="subcellular location">
    <subcellularLocation>
        <location evidence="1">Cell inner membrane</location>
        <topology evidence="1">Multi-pass membrane protein</topology>
    </subcellularLocation>
</comment>
<comment type="similarity">
    <text evidence="1">Belongs to the OXA1/ALB3/YidC family. Type 1 subfamily.</text>
</comment>
<protein>
    <recommendedName>
        <fullName evidence="1">Membrane protein insertase YidC</fullName>
    </recommendedName>
    <alternativeName>
        <fullName evidence="1">Foldase YidC</fullName>
    </alternativeName>
    <alternativeName>
        <fullName evidence="1">Membrane integrase YidC</fullName>
    </alternativeName>
    <alternativeName>
        <fullName evidence="1">Membrane protein YidC</fullName>
    </alternativeName>
</protein>
<dbReference type="EMBL" id="CP000931">
    <property type="protein sequence ID" value="ABZ78851.1"/>
    <property type="molecule type" value="Genomic_DNA"/>
</dbReference>
<dbReference type="RefSeq" id="WP_012279354.1">
    <property type="nucleotide sequence ID" value="NC_010334.1"/>
</dbReference>
<dbReference type="SMR" id="B0TQH1"/>
<dbReference type="STRING" id="458817.Shal_4311"/>
<dbReference type="KEGG" id="shl:Shal_4311"/>
<dbReference type="eggNOG" id="COG0706">
    <property type="taxonomic scope" value="Bacteria"/>
</dbReference>
<dbReference type="HOGENOM" id="CLU_016535_3_0_6"/>
<dbReference type="OrthoDB" id="9780552at2"/>
<dbReference type="Proteomes" id="UP000001317">
    <property type="component" value="Chromosome"/>
</dbReference>
<dbReference type="GO" id="GO:0005886">
    <property type="term" value="C:plasma membrane"/>
    <property type="evidence" value="ECO:0007669"/>
    <property type="project" value="UniProtKB-SubCell"/>
</dbReference>
<dbReference type="GO" id="GO:0032977">
    <property type="term" value="F:membrane insertase activity"/>
    <property type="evidence" value="ECO:0007669"/>
    <property type="project" value="InterPro"/>
</dbReference>
<dbReference type="GO" id="GO:0051205">
    <property type="term" value="P:protein insertion into membrane"/>
    <property type="evidence" value="ECO:0007669"/>
    <property type="project" value="TreeGrafter"/>
</dbReference>
<dbReference type="GO" id="GO:0015031">
    <property type="term" value="P:protein transport"/>
    <property type="evidence" value="ECO:0007669"/>
    <property type="project" value="UniProtKB-KW"/>
</dbReference>
<dbReference type="CDD" id="cd20070">
    <property type="entry name" value="5TM_YidC_Alb3"/>
    <property type="match status" value="1"/>
</dbReference>
<dbReference type="CDD" id="cd19961">
    <property type="entry name" value="EcYidC-like_peri"/>
    <property type="match status" value="1"/>
</dbReference>
<dbReference type="Gene3D" id="2.70.98.90">
    <property type="match status" value="1"/>
</dbReference>
<dbReference type="HAMAP" id="MF_01810">
    <property type="entry name" value="YidC_type1"/>
    <property type="match status" value="1"/>
</dbReference>
<dbReference type="InterPro" id="IPR019998">
    <property type="entry name" value="Membr_insert_YidC"/>
</dbReference>
<dbReference type="InterPro" id="IPR028053">
    <property type="entry name" value="Membr_insert_YidC_N"/>
</dbReference>
<dbReference type="InterPro" id="IPR001708">
    <property type="entry name" value="YidC/ALB3/OXA1/COX18"/>
</dbReference>
<dbReference type="InterPro" id="IPR028055">
    <property type="entry name" value="YidC/Oxa/ALB_C"/>
</dbReference>
<dbReference type="InterPro" id="IPR047196">
    <property type="entry name" value="YidC_ALB_C"/>
</dbReference>
<dbReference type="InterPro" id="IPR038221">
    <property type="entry name" value="YidC_periplasmic_sf"/>
</dbReference>
<dbReference type="NCBIfam" id="NF002351">
    <property type="entry name" value="PRK01318.1-1"/>
    <property type="match status" value="1"/>
</dbReference>
<dbReference type="NCBIfam" id="NF002352">
    <property type="entry name" value="PRK01318.1-3"/>
    <property type="match status" value="1"/>
</dbReference>
<dbReference type="NCBIfam" id="TIGR03593">
    <property type="entry name" value="yidC_nterm"/>
    <property type="match status" value="1"/>
</dbReference>
<dbReference type="NCBIfam" id="TIGR03592">
    <property type="entry name" value="yidC_oxa1_cterm"/>
    <property type="match status" value="1"/>
</dbReference>
<dbReference type="PANTHER" id="PTHR12428:SF65">
    <property type="entry name" value="CYTOCHROME C OXIDASE ASSEMBLY PROTEIN COX18, MITOCHONDRIAL"/>
    <property type="match status" value="1"/>
</dbReference>
<dbReference type="PANTHER" id="PTHR12428">
    <property type="entry name" value="OXA1"/>
    <property type="match status" value="1"/>
</dbReference>
<dbReference type="Pfam" id="PF02096">
    <property type="entry name" value="60KD_IMP"/>
    <property type="match status" value="1"/>
</dbReference>
<dbReference type="Pfam" id="PF14849">
    <property type="entry name" value="YidC_periplas"/>
    <property type="match status" value="1"/>
</dbReference>
<dbReference type="PRINTS" id="PR00701">
    <property type="entry name" value="60KDINNERMP"/>
</dbReference>
<dbReference type="PRINTS" id="PR01900">
    <property type="entry name" value="YIDCPROTEIN"/>
</dbReference>
<reference key="1">
    <citation type="submission" date="2008-01" db="EMBL/GenBank/DDBJ databases">
        <title>Complete sequence of Shewanella halifaxensis HAW-EB4.</title>
        <authorList>
            <consortium name="US DOE Joint Genome Institute"/>
            <person name="Copeland A."/>
            <person name="Lucas S."/>
            <person name="Lapidus A."/>
            <person name="Glavina del Rio T."/>
            <person name="Dalin E."/>
            <person name="Tice H."/>
            <person name="Bruce D."/>
            <person name="Goodwin L."/>
            <person name="Pitluck S."/>
            <person name="Sims D."/>
            <person name="Brettin T."/>
            <person name="Detter J.C."/>
            <person name="Han C."/>
            <person name="Kuske C.R."/>
            <person name="Schmutz J."/>
            <person name="Larimer F."/>
            <person name="Land M."/>
            <person name="Hauser L."/>
            <person name="Kyrpides N."/>
            <person name="Kim E."/>
            <person name="Zhao J.-S."/>
            <person name="Richardson P."/>
        </authorList>
    </citation>
    <scope>NUCLEOTIDE SEQUENCE [LARGE SCALE GENOMIC DNA]</scope>
    <source>
        <strain>HAW-EB4</strain>
    </source>
</reference>
<accession>B0TQH1</accession>
<feature type="chain" id="PRO_1000088264" description="Membrane protein insertase YidC">
    <location>
        <begin position="1"/>
        <end position="544"/>
    </location>
</feature>
<feature type="transmembrane region" description="Helical" evidence="1">
    <location>
        <begin position="6"/>
        <end position="26"/>
    </location>
</feature>
<feature type="transmembrane region" description="Helical" evidence="1">
    <location>
        <begin position="345"/>
        <end position="365"/>
    </location>
</feature>
<feature type="transmembrane region" description="Helical" evidence="1">
    <location>
        <begin position="423"/>
        <end position="443"/>
    </location>
</feature>
<feature type="transmembrane region" description="Helical" evidence="1">
    <location>
        <begin position="460"/>
        <end position="480"/>
    </location>
</feature>
<feature type="transmembrane region" description="Helical" evidence="1">
    <location>
        <begin position="503"/>
        <end position="523"/>
    </location>
</feature>
<feature type="region of interest" description="Disordered" evidence="2">
    <location>
        <begin position="34"/>
        <end position="58"/>
    </location>
</feature>
<feature type="compositionally biased region" description="Polar residues" evidence="2">
    <location>
        <begin position="39"/>
        <end position="49"/>
    </location>
</feature>
<name>YIDC_SHEHH</name>
<organism>
    <name type="scientific">Shewanella halifaxensis (strain HAW-EB4)</name>
    <dbReference type="NCBI Taxonomy" id="458817"/>
    <lineage>
        <taxon>Bacteria</taxon>
        <taxon>Pseudomonadati</taxon>
        <taxon>Pseudomonadota</taxon>
        <taxon>Gammaproteobacteria</taxon>
        <taxon>Alteromonadales</taxon>
        <taxon>Shewanellaceae</taxon>
        <taxon>Shewanella</taxon>
    </lineage>
</organism>
<gene>
    <name evidence="1" type="primary">yidC</name>
    <name type="ordered locus">Shal_4311</name>
</gene>
<proteinExistence type="inferred from homology"/>
<sequence>MESQRNILLIGLLFVSFLLWQQWQADQAPQPVAAAQTQSSIPASTVADSHSSDVPDADSAVPEAITASKELITVFTDQLEIKIDPVGGDIVYSALLSHKLEENGDDPFVLLEQTNDIYYIAQSGLIGRDGIDSSVKGRAHFDSASREYKLADGQDTLSVPLTYVSDKGVTYTKSFVFTRGKYNIAVDYKINNTSDASLQVQMYGQIKHSIKKSESSMMMPTYLGGAFSTDDIRYEKYSFDDMADKNLDDSTLGGWVAMLQHYFVSAWVPPATEKNIIFSSMKNGLANIGFRGELHDIAPGSEQVIKSEFYVGPKDQKALSVLSPSLNLVVDYGFLWWLAVPIYKLLMFFHSIVGNWGFAIILITLTVRGLLYPLTKAQYTSMAKMRNLQPKLAELKERFGDDRQKMGQAMMELYKKEKVNPMGGCLPILLQMPIFIALYWVLLESVELRHAPFMLWITDLSVQDPYYVLPILMGISMFVMQKMQPMAPTMDPMQVKMMQWMPVIFTVFFLWFPAGLVLYWLVGNLVAITQQKIIYAGLEKKGLK</sequence>